<feature type="signal peptide" evidence="3">
    <location>
        <begin position="1" status="less than"/>
        <end position="6"/>
    </location>
</feature>
<feature type="propeptide" id="PRO_0000322625" evidence="1">
    <location>
        <begin position="7"/>
        <end position="174"/>
    </location>
</feature>
<feature type="chain" id="PRO_0000322626" description="Snake venom metalloproteinase MD2">
    <location>
        <begin position="175"/>
        <end position="376"/>
    </location>
</feature>
<feature type="propeptide" id="PRO_0000322627" evidence="1">
    <location>
        <begin position="377"/>
        <end position="401"/>
    </location>
</feature>
<feature type="chain" id="PRO_0000322628" description="Disintegrin">
    <location>
        <begin position="402"/>
        <end position="466"/>
    </location>
</feature>
<feature type="domain" description="Peptidase M12B" evidence="5">
    <location>
        <begin position="180"/>
        <end position="377"/>
    </location>
</feature>
<feature type="domain" description="Disintegrin" evidence="4">
    <location>
        <begin position="385"/>
        <end position="466"/>
    </location>
</feature>
<feature type="short sequence motif" description="Cell attachment site">
    <location>
        <begin position="444"/>
        <end position="446"/>
    </location>
</feature>
<feature type="active site" evidence="5">
    <location>
        <position position="317"/>
    </location>
</feature>
<feature type="binding site" evidence="1">
    <location>
        <position position="183"/>
    </location>
    <ligand>
        <name>Ca(2+)</name>
        <dbReference type="ChEBI" id="CHEBI:29108"/>
    </ligand>
</feature>
<feature type="binding site" evidence="1">
    <location>
        <position position="267"/>
    </location>
    <ligand>
        <name>Ca(2+)</name>
        <dbReference type="ChEBI" id="CHEBI:29108"/>
    </ligand>
</feature>
<feature type="binding site" evidence="5">
    <location>
        <position position="316"/>
    </location>
    <ligand>
        <name>Zn(2+)</name>
        <dbReference type="ChEBI" id="CHEBI:29105"/>
        <note>catalytic</note>
    </ligand>
</feature>
<feature type="binding site" evidence="5">
    <location>
        <position position="320"/>
    </location>
    <ligand>
        <name>Zn(2+)</name>
        <dbReference type="ChEBI" id="CHEBI:29105"/>
        <note>catalytic</note>
    </ligand>
</feature>
<feature type="binding site" evidence="5">
    <location>
        <position position="326"/>
    </location>
    <ligand>
        <name>Zn(2+)</name>
        <dbReference type="ChEBI" id="CHEBI:29105"/>
        <note>catalytic</note>
    </ligand>
</feature>
<feature type="binding site" evidence="1">
    <location>
        <position position="372"/>
    </location>
    <ligand>
        <name>Ca(2+)</name>
        <dbReference type="ChEBI" id="CHEBI:29108"/>
    </ligand>
</feature>
<feature type="binding site" evidence="1">
    <location>
        <position position="375"/>
    </location>
    <ligand>
        <name>Ca(2+)</name>
        <dbReference type="ChEBI" id="CHEBI:29108"/>
    </ligand>
</feature>
<feature type="disulfide bond" evidence="5">
    <location>
        <begin position="291"/>
        <end position="372"/>
    </location>
</feature>
<feature type="disulfide bond" evidence="5">
    <location>
        <begin position="331"/>
        <end position="356"/>
    </location>
</feature>
<feature type="disulfide bond" evidence="5">
    <location>
        <begin position="333"/>
        <end position="339"/>
    </location>
</feature>
<feature type="disulfide bond" evidence="2">
    <location>
        <begin position="422"/>
        <end position="428"/>
    </location>
</feature>
<feature type="disulfide bond" evidence="2">
    <location>
        <begin position="427"/>
        <end position="452"/>
    </location>
</feature>
<feature type="disulfide bond" evidence="2 4">
    <location>
        <begin position="440"/>
        <end position="459"/>
    </location>
</feature>
<feature type="non-terminal residue" evidence="6">
    <location>
        <position position="1"/>
    </location>
</feature>
<comment type="function">
    <molecule>Snake venom metalloproteinase MD2</molecule>
    <text evidence="1">Impairs hemostasis in the envenomed animal.</text>
</comment>
<comment type="function">
    <molecule>Disintegrin</molecule>
    <text evidence="1">Inhibits platelet aggregation induced by ADP, thrombin, platelet-activating factor and collagen. Acts by inhibiting fibrinogen interaction with platelet receptors GPIIb/GPIIIa (ITGA2B/ITGB3) (By similarity).</text>
</comment>
<comment type="cofactor">
    <cofactor evidence="1">
        <name>Zn(2+)</name>
        <dbReference type="ChEBI" id="CHEBI:29105"/>
    </cofactor>
    <text evidence="1">Binds 1 zinc ion per subunit.</text>
</comment>
<comment type="subunit">
    <text evidence="1">Monomer.</text>
</comment>
<comment type="subcellular location">
    <subcellularLocation>
        <location evidence="7">Secreted</location>
    </subcellularLocation>
</comment>
<comment type="tissue specificity">
    <text evidence="7">Expressed by the venom gland.</text>
</comment>
<comment type="miscellaneous">
    <text>The disintegrin belongs to the medium disintegrin subfamily.</text>
</comment>
<comment type="similarity">
    <text evidence="6">Belongs to the venom metalloproteinase (M12B) family. P-II subfamily. P-IIa sub-subfamily.</text>
</comment>
<accession>Q9IAX6</accession>
<reference key="1">
    <citation type="journal article" date="2000" name="Eur. J. Biochem.">
        <title>Purification, cloning and sequence analyses for pro-metalloprotease-disintegrin variants from Deinagkistrodon acutus venom and subclassification of the small venom metalloproteases.</title>
        <authorList>
            <person name="Tsai I.-H."/>
            <person name="Wang Y.-M."/>
            <person name="Chiang T.-Y."/>
            <person name="Chen Y.-L."/>
            <person name="Huang R.-J."/>
        </authorList>
    </citation>
    <scope>NUCLEOTIDE SEQUENCE [MRNA]</scope>
    <source>
        <tissue>Venom gland</tissue>
    </source>
</reference>
<dbReference type="EC" id="3.4.24.-"/>
<dbReference type="EMBL" id="AF117637">
    <property type="protein sequence ID" value="AAF61189.1"/>
    <property type="molecule type" value="mRNA"/>
</dbReference>
<dbReference type="SMR" id="Q9IAX6"/>
<dbReference type="MEROPS" id="M12.160"/>
<dbReference type="GO" id="GO:0005576">
    <property type="term" value="C:extracellular region"/>
    <property type="evidence" value="ECO:0007669"/>
    <property type="project" value="UniProtKB-SubCell"/>
</dbReference>
<dbReference type="GO" id="GO:0005886">
    <property type="term" value="C:plasma membrane"/>
    <property type="evidence" value="ECO:0007669"/>
    <property type="project" value="TreeGrafter"/>
</dbReference>
<dbReference type="GO" id="GO:0046872">
    <property type="term" value="F:metal ion binding"/>
    <property type="evidence" value="ECO:0007669"/>
    <property type="project" value="UniProtKB-KW"/>
</dbReference>
<dbReference type="GO" id="GO:0004222">
    <property type="term" value="F:metalloendopeptidase activity"/>
    <property type="evidence" value="ECO:0007669"/>
    <property type="project" value="InterPro"/>
</dbReference>
<dbReference type="GO" id="GO:0090729">
    <property type="term" value="F:toxin activity"/>
    <property type="evidence" value="ECO:0007669"/>
    <property type="project" value="UniProtKB-KW"/>
</dbReference>
<dbReference type="GO" id="GO:0006508">
    <property type="term" value="P:proteolysis"/>
    <property type="evidence" value="ECO:0007669"/>
    <property type="project" value="UniProtKB-KW"/>
</dbReference>
<dbReference type="CDD" id="cd04269">
    <property type="entry name" value="ZnMc_adamalysin_II_like"/>
    <property type="match status" value="1"/>
</dbReference>
<dbReference type="FunFam" id="3.40.390.10:FF:000002">
    <property type="entry name" value="Disintegrin and metalloproteinase domain-containing protein 22"/>
    <property type="match status" value="1"/>
</dbReference>
<dbReference type="Gene3D" id="3.40.390.10">
    <property type="entry name" value="Collagenase (Catalytic Domain)"/>
    <property type="match status" value="1"/>
</dbReference>
<dbReference type="Gene3D" id="4.10.70.10">
    <property type="entry name" value="Disintegrin domain"/>
    <property type="match status" value="1"/>
</dbReference>
<dbReference type="InterPro" id="IPR001762">
    <property type="entry name" value="Disintegrin_dom"/>
</dbReference>
<dbReference type="InterPro" id="IPR036436">
    <property type="entry name" value="Disintegrin_dom_sf"/>
</dbReference>
<dbReference type="InterPro" id="IPR024079">
    <property type="entry name" value="MetalloPept_cat_dom_sf"/>
</dbReference>
<dbReference type="InterPro" id="IPR001590">
    <property type="entry name" value="Peptidase_M12B"/>
</dbReference>
<dbReference type="InterPro" id="IPR002870">
    <property type="entry name" value="Peptidase_M12B_N"/>
</dbReference>
<dbReference type="InterPro" id="IPR034027">
    <property type="entry name" value="Reprolysin_adamalysin"/>
</dbReference>
<dbReference type="PANTHER" id="PTHR11905">
    <property type="entry name" value="ADAM A DISINTEGRIN AND METALLOPROTEASE DOMAIN"/>
    <property type="match status" value="1"/>
</dbReference>
<dbReference type="PANTHER" id="PTHR11905:SF32">
    <property type="entry name" value="DISINTEGRIN AND METALLOPROTEINASE DOMAIN-CONTAINING PROTEIN 28"/>
    <property type="match status" value="1"/>
</dbReference>
<dbReference type="Pfam" id="PF00200">
    <property type="entry name" value="Disintegrin"/>
    <property type="match status" value="1"/>
</dbReference>
<dbReference type="Pfam" id="PF01562">
    <property type="entry name" value="Pep_M12B_propep"/>
    <property type="match status" value="1"/>
</dbReference>
<dbReference type="Pfam" id="PF01421">
    <property type="entry name" value="Reprolysin"/>
    <property type="match status" value="1"/>
</dbReference>
<dbReference type="PRINTS" id="PR00289">
    <property type="entry name" value="DISINTEGRIN"/>
</dbReference>
<dbReference type="SMART" id="SM00050">
    <property type="entry name" value="DISIN"/>
    <property type="match status" value="1"/>
</dbReference>
<dbReference type="SUPFAM" id="SSF57552">
    <property type="entry name" value="Blood coagulation inhibitor (disintegrin)"/>
    <property type="match status" value="1"/>
</dbReference>
<dbReference type="SUPFAM" id="SSF55486">
    <property type="entry name" value="Metalloproteases ('zincins'), catalytic domain"/>
    <property type="match status" value="1"/>
</dbReference>
<dbReference type="PROSITE" id="PS50215">
    <property type="entry name" value="ADAM_MEPRO"/>
    <property type="match status" value="1"/>
</dbReference>
<dbReference type="PROSITE" id="PS50214">
    <property type="entry name" value="DISINTEGRIN_2"/>
    <property type="match status" value="1"/>
</dbReference>
<dbReference type="PROSITE" id="PS00142">
    <property type="entry name" value="ZINC_PROTEASE"/>
    <property type="match status" value="1"/>
</dbReference>
<name>VM2M2_DEIAC</name>
<evidence type="ECO:0000250" key="1"/>
<evidence type="ECO:0000250" key="2">
    <source>
        <dbReference type="UniProtKB" id="Q0NZX5"/>
    </source>
</evidence>
<evidence type="ECO:0000255" key="3"/>
<evidence type="ECO:0000255" key="4">
    <source>
        <dbReference type="PROSITE-ProRule" id="PRU00068"/>
    </source>
</evidence>
<evidence type="ECO:0000255" key="5">
    <source>
        <dbReference type="PROSITE-ProRule" id="PRU00276"/>
    </source>
</evidence>
<evidence type="ECO:0000305" key="6"/>
<evidence type="ECO:0000305" key="7">
    <source>
    </source>
</evidence>
<protein>
    <recommendedName>
        <fullName>Zinc metalloproteinase/disintegrin</fullName>
    </recommendedName>
    <component>
        <recommendedName>
            <fullName>Snake venom metalloproteinase MD2</fullName>
            <shortName>SVMP</shortName>
            <ecNumber>3.4.24.-</ecNumber>
        </recommendedName>
        <alternativeName>
            <fullName>DaMD2</fullName>
        </alternativeName>
    </component>
    <component>
        <recommendedName>
            <fullName>Disintegrin</fullName>
        </recommendedName>
    </component>
</protein>
<keyword id="KW-0106">Calcium</keyword>
<keyword id="KW-1217">Cell adhesion impairing toxin</keyword>
<keyword id="KW-1015">Disulfide bond</keyword>
<keyword id="KW-1199">Hemostasis impairing toxin</keyword>
<keyword id="KW-0378">Hydrolase</keyword>
<keyword id="KW-0479">Metal-binding</keyword>
<keyword id="KW-0482">Metalloprotease</keyword>
<keyword id="KW-1201">Platelet aggregation inhibiting toxin</keyword>
<keyword id="KW-0645">Protease</keyword>
<keyword id="KW-0964">Secreted</keyword>
<keyword id="KW-0732">Signal</keyword>
<keyword id="KW-0800">Toxin</keyword>
<keyword id="KW-0862">Zinc</keyword>
<keyword id="KW-0865">Zymogen</keyword>
<organism>
    <name type="scientific">Deinagkistrodon acutus</name>
    <name type="common">Hundred-pace snake</name>
    <name type="synonym">Agkistrodon acutus</name>
    <dbReference type="NCBI Taxonomy" id="36307"/>
    <lineage>
        <taxon>Eukaryota</taxon>
        <taxon>Metazoa</taxon>
        <taxon>Chordata</taxon>
        <taxon>Craniata</taxon>
        <taxon>Vertebrata</taxon>
        <taxon>Euteleostomi</taxon>
        <taxon>Lepidosauria</taxon>
        <taxon>Squamata</taxon>
        <taxon>Bifurcata</taxon>
        <taxon>Unidentata</taxon>
        <taxon>Episquamata</taxon>
        <taxon>Toxicofera</taxon>
        <taxon>Serpentes</taxon>
        <taxon>Colubroidea</taxon>
        <taxon>Viperidae</taxon>
        <taxon>Crotalinae</taxon>
        <taxon>Deinagkistrodon</taxon>
    </lineage>
</organism>
<proteinExistence type="evidence at transcript level"/>
<sequence>FPYQGSSIILESGNVNDYEVVYPRKVTALPKGAVQQKYEDTMQYEFKVNGEPVVLHLEKNKGLFSKDYSETHYSPDGRRITTHPLVEDHCYYRGRIRNDADSTASISACNGLKGHFKLRGETYLIEPMKISNSEAHAVYKYENVEKEDEAHKMCGVTQNWESYEPIKKASQLIVTPEHQRYMEIVIVVDHSMYTKYNGDSDKIKTWIYEMSNTIRESYRYLYIDTSVAAIEIWSEKDLINVETSAKNTLESFGEWRARDLIHRISHDNAQLLTATDLDGPTIGLAYVASMCDPKRSVGVVQDHSSVNHLVAITLAHEIAHNLGVRHDEGSCSCGSGYTCIMSPVINPDAMKYFSDCSYIQCWDYIMKENPPCILNKPLRTDTVSTPVSGNELLEAGKDYDRDSSANPCYDAATCKLNQGAQCTAGPCCDQGRFKEEGTICRRARGDDLDDYCNGISGDCPRNPYHA</sequence>